<keyword id="KW-1003">Cell membrane</keyword>
<keyword id="KW-0966">Cell projection</keyword>
<keyword id="KW-0963">Cytoplasm</keyword>
<keyword id="KW-0968">Cytoplasmic vesicle</keyword>
<keyword id="KW-0343">GTPase activation</keyword>
<keyword id="KW-0472">Membrane</keyword>
<keyword id="KW-1185">Reference proteome</keyword>
<keyword id="KW-0770">Synapse</keyword>
<feature type="chain" id="PRO_0000288507" description="TBC1 domain family member 24">
    <location>
        <begin position="1"/>
        <end position="562"/>
    </location>
</feature>
<feature type="domain" description="Rab-GAP TBC">
    <location>
        <begin position="42"/>
        <end position="259"/>
    </location>
</feature>
<feature type="domain" description="TLDc" evidence="3">
    <location>
        <begin position="337"/>
        <end position="549"/>
    </location>
</feature>
<feature type="region of interest" description="Disordered" evidence="4">
    <location>
        <begin position="451"/>
        <end position="471"/>
    </location>
</feature>
<feature type="compositionally biased region" description="Low complexity" evidence="4">
    <location>
        <begin position="451"/>
        <end position="464"/>
    </location>
</feature>
<feature type="binding site" evidence="2">
    <location>
        <position position="36"/>
    </location>
    <ligand>
        <name>a 1,2-diacyl-sn-glycero-3-phospho-(1D-myo-inositol)</name>
        <dbReference type="ChEBI" id="CHEBI:57880"/>
    </ligand>
</feature>
<feature type="binding site" evidence="2">
    <location>
        <position position="40"/>
    </location>
    <ligand>
        <name>a 1,2-diacyl-sn-glycero-3-phospho-(1D-myo-inositol)</name>
        <dbReference type="ChEBI" id="CHEBI:57880"/>
    </ligand>
</feature>
<feature type="binding site" evidence="2">
    <location>
        <position position="238"/>
    </location>
    <ligand>
        <name>a 1,2-diacyl-sn-glycero-3-phospho-(1D-myo-inositol)</name>
        <dbReference type="ChEBI" id="CHEBI:57880"/>
    </ligand>
</feature>
<feature type="binding site" evidence="2">
    <location>
        <position position="242"/>
    </location>
    <ligand>
        <name>a 1,2-diacyl-sn-glycero-3-phospho-(1D-myo-inositol)</name>
        <dbReference type="ChEBI" id="CHEBI:57880"/>
    </ligand>
</feature>
<feature type="binding site" evidence="2">
    <location>
        <begin position="293"/>
        <end position="297"/>
    </location>
    <ligand>
        <name>a 1,2-diacyl-sn-glycero-3-phospho-(1D-myo-inositol)</name>
        <dbReference type="ChEBI" id="CHEBI:57880"/>
    </ligand>
</feature>
<protein>
    <recommendedName>
        <fullName>TBC1 domain family member 24</fullName>
    </recommendedName>
</protein>
<comment type="function">
    <text evidence="1">May act as a GTPase-activating protein for Rab family protein(s). Involved in neuronal projections development, probably through a negative modulation of ARF6 function. Involved in the regulation of synaptic vesicle trafficking.</text>
</comment>
<comment type="subunit">
    <text evidence="1">Interacts with ARF6.</text>
</comment>
<comment type="subcellular location">
    <subcellularLocation>
        <location evidence="1">Cell membrane</location>
        <topology evidence="1">Peripheral membrane protein</topology>
    </subcellularLocation>
    <subcellularLocation>
        <location evidence="1">Cytoplasm</location>
    </subcellularLocation>
    <subcellularLocation>
        <location evidence="2">Cytoplasmic vesicle membrane</location>
    </subcellularLocation>
    <subcellularLocation>
        <location evidence="1">Presynapse</location>
    </subcellularLocation>
    <text evidence="1 2">Mainly cytoplasmic with partial expression at the plasma membrane (By similarity). Associates with certain types of membrane phosphoinositides, preferentially those phosphorylated at the D5 position of the inositol ring such as phosphatidylinositol 4,5-bisphosphate (PIP2) and phosphatidylinositol 3,4,5-trisphosphate (PIP3) (By similarity).</text>
</comment>
<comment type="domain">
    <text evidence="2">The Rab-GAP TBC domain is essential for phosphatidylinositol binding.</text>
</comment>
<reference key="1">
    <citation type="submission" date="2006-09" db="EMBL/GenBank/DDBJ databases">
        <authorList>
            <consortium name="NIH - Xenopus Gene Collection (XGC) project"/>
        </authorList>
    </citation>
    <scope>NUCLEOTIDE SEQUENCE [LARGE SCALE MRNA]</scope>
    <source>
        <strain>N6</strain>
        <tissue>Oviduct</tissue>
    </source>
</reference>
<gene>
    <name type="primary">tbc1d24</name>
</gene>
<evidence type="ECO:0000250" key="1">
    <source>
        <dbReference type="UniProtKB" id="Q9ULP9"/>
    </source>
</evidence>
<evidence type="ECO:0000250" key="2">
    <source>
        <dbReference type="UniProtKB" id="Q9VIH7"/>
    </source>
</evidence>
<evidence type="ECO:0000255" key="3">
    <source>
        <dbReference type="PROSITE-ProRule" id="PRU01234"/>
    </source>
</evidence>
<evidence type="ECO:0000256" key="4">
    <source>
        <dbReference type="SAM" id="MobiDB-lite"/>
    </source>
</evidence>
<dbReference type="EMBL" id="BC124045">
    <property type="protein sequence ID" value="AAI24046.1"/>
    <property type="molecule type" value="mRNA"/>
</dbReference>
<dbReference type="RefSeq" id="NP_001072701.1">
    <property type="nucleotide sequence ID" value="NM_001079233.1"/>
</dbReference>
<dbReference type="SMR" id="Q08CX5"/>
<dbReference type="FunCoup" id="Q08CX5">
    <property type="interactions" value="348"/>
</dbReference>
<dbReference type="STRING" id="8364.ENSXETP00000038986"/>
<dbReference type="PaxDb" id="8364-ENSXETP00000061659"/>
<dbReference type="GeneID" id="780158"/>
<dbReference type="KEGG" id="xtr:780158"/>
<dbReference type="AGR" id="Xenbase:XB-GENE-981681"/>
<dbReference type="CTD" id="57465"/>
<dbReference type="Xenbase" id="XB-GENE-981681">
    <property type="gene designation" value="tbc1d24"/>
</dbReference>
<dbReference type="eggNOG" id="KOG2801">
    <property type="taxonomic scope" value="Eukaryota"/>
</dbReference>
<dbReference type="HOGENOM" id="CLU_018035_1_1_1"/>
<dbReference type="InParanoid" id="Q08CX5"/>
<dbReference type="OrthoDB" id="10065050at2759"/>
<dbReference type="TreeFam" id="TF315420"/>
<dbReference type="Proteomes" id="UP000008143">
    <property type="component" value="Chromosome 9"/>
</dbReference>
<dbReference type="Bgee" id="ENSXETG00000020284">
    <property type="expression patterns" value="Expressed in ovary and 16 other cell types or tissues"/>
</dbReference>
<dbReference type="GO" id="GO:0042995">
    <property type="term" value="C:cell projection"/>
    <property type="evidence" value="ECO:0007669"/>
    <property type="project" value="UniProtKB-KW"/>
</dbReference>
<dbReference type="GO" id="GO:0030659">
    <property type="term" value="C:cytoplasmic vesicle membrane"/>
    <property type="evidence" value="ECO:0007669"/>
    <property type="project" value="UniProtKB-SubCell"/>
</dbReference>
<dbReference type="GO" id="GO:0005886">
    <property type="term" value="C:plasma membrane"/>
    <property type="evidence" value="ECO:0007669"/>
    <property type="project" value="UniProtKB-SubCell"/>
</dbReference>
<dbReference type="GO" id="GO:0098793">
    <property type="term" value="C:presynapse"/>
    <property type="evidence" value="ECO:0007669"/>
    <property type="project" value="UniProtKB-SubCell"/>
</dbReference>
<dbReference type="GO" id="GO:0005096">
    <property type="term" value="F:GTPase activator activity"/>
    <property type="evidence" value="ECO:0007669"/>
    <property type="project" value="UniProtKB-KW"/>
</dbReference>
<dbReference type="Gene3D" id="1.10.472.80">
    <property type="entry name" value="Ypt/Rab-GAP domain of gyp1p, domain 3"/>
    <property type="match status" value="1"/>
</dbReference>
<dbReference type="InterPro" id="IPR000195">
    <property type="entry name" value="Rab-GAP-TBC_dom"/>
</dbReference>
<dbReference type="InterPro" id="IPR035969">
    <property type="entry name" value="Rab-GAP_TBC_sf"/>
</dbReference>
<dbReference type="InterPro" id="IPR006571">
    <property type="entry name" value="TLDc_dom"/>
</dbReference>
<dbReference type="PANTHER" id="PTHR23354">
    <property type="entry name" value="NUCLEOLAR PROTEIN 7/ESTROGEN RECEPTOR COACTIVATOR-RELATED"/>
    <property type="match status" value="1"/>
</dbReference>
<dbReference type="PANTHER" id="PTHR23354:SF125">
    <property type="entry name" value="TBC1 DOMAIN FAMILY MEMBER 24"/>
    <property type="match status" value="1"/>
</dbReference>
<dbReference type="Pfam" id="PF00566">
    <property type="entry name" value="RabGAP-TBC"/>
    <property type="match status" value="1"/>
</dbReference>
<dbReference type="Pfam" id="PF07534">
    <property type="entry name" value="TLD"/>
    <property type="match status" value="2"/>
</dbReference>
<dbReference type="SMART" id="SM00164">
    <property type="entry name" value="TBC"/>
    <property type="match status" value="1"/>
</dbReference>
<dbReference type="SMART" id="SM00584">
    <property type="entry name" value="TLDc"/>
    <property type="match status" value="1"/>
</dbReference>
<dbReference type="SUPFAM" id="SSF47923">
    <property type="entry name" value="Ypt/Rab-GAP domain of gyp1p"/>
    <property type="match status" value="2"/>
</dbReference>
<dbReference type="PROSITE" id="PS51886">
    <property type="entry name" value="TLDC"/>
    <property type="match status" value="1"/>
</dbReference>
<proteinExistence type="evidence at transcript level"/>
<name>TBC24_XENTR</name>
<accession>Q08CX5</accession>
<sequence length="562" mass="63716">MDDTEYGRFVDWDKMEGGGQEQSTKVLSCTDFQDLKQMARQGHWAKSHSLRAKVYQKLIKEIPCRTVTPDASVYRDIVGKIVGKRPASSLPLPEFVDDRQIPSYCLNSEGIGAVRKIITCISNQFPDISFCPALPSLVALLLHYSQDEAECFENVSRILACNDPNRRLVDQTFLAFESSCMTFGDLAGKYCQGPHKLMVAVSEDVLEVYSDWQRWIFGELPFAYITRVFDVFLVEGYKVLFRVALALLKFFHKVRGGQPMESNNVKRDIQMFVRDLNQCVAPEKLLEKAFAIRLFSRKEIQLLQMANEKALQQKGITVKQKRQNVHLAVHAENFKSEIVSVKEMRDIWSWIPERFALSQPLLLYTNREHGNSLSRFYLHCEGHEPTLLLIKTTNQEVCGAFLSTDWSERRRSGNKLSFFGTGECFVFRLQPEVERYEWVVIKHPELGKVNASSGDNDANSSQSAKDGIDPSDRLSPFLATRHFNLPSKSASMFMAGSTDCIIIGGGDGQALYFDSDLNYGRTSHCNTFNNQPLCSETFQISIIEVWGFKDNVNNDGAHSALP</sequence>
<organism>
    <name type="scientific">Xenopus tropicalis</name>
    <name type="common">Western clawed frog</name>
    <name type="synonym">Silurana tropicalis</name>
    <dbReference type="NCBI Taxonomy" id="8364"/>
    <lineage>
        <taxon>Eukaryota</taxon>
        <taxon>Metazoa</taxon>
        <taxon>Chordata</taxon>
        <taxon>Craniata</taxon>
        <taxon>Vertebrata</taxon>
        <taxon>Euteleostomi</taxon>
        <taxon>Amphibia</taxon>
        <taxon>Batrachia</taxon>
        <taxon>Anura</taxon>
        <taxon>Pipoidea</taxon>
        <taxon>Pipidae</taxon>
        <taxon>Xenopodinae</taxon>
        <taxon>Xenopus</taxon>
        <taxon>Silurana</taxon>
    </lineage>
</organism>